<gene>
    <name type="ordered locus">PFL_1610</name>
</gene>
<dbReference type="EC" id="4.2.1.96" evidence="1"/>
<dbReference type="EMBL" id="CP000076">
    <property type="protein sequence ID" value="AAY90907.1"/>
    <property type="molecule type" value="Genomic_DNA"/>
</dbReference>
<dbReference type="RefSeq" id="WP_007930096.1">
    <property type="nucleotide sequence ID" value="NC_004129.6"/>
</dbReference>
<dbReference type="SMR" id="Q4KG97"/>
<dbReference type="STRING" id="220664.PFL_1610"/>
<dbReference type="KEGG" id="pfl:PFL_1610"/>
<dbReference type="eggNOG" id="COG2154">
    <property type="taxonomic scope" value="Bacteria"/>
</dbReference>
<dbReference type="HOGENOM" id="CLU_081974_2_2_6"/>
<dbReference type="Proteomes" id="UP000008540">
    <property type="component" value="Chromosome"/>
</dbReference>
<dbReference type="GO" id="GO:0008124">
    <property type="term" value="F:4-alpha-hydroxytetrahydrobiopterin dehydratase activity"/>
    <property type="evidence" value="ECO:0007669"/>
    <property type="project" value="UniProtKB-UniRule"/>
</dbReference>
<dbReference type="GO" id="GO:0006729">
    <property type="term" value="P:tetrahydrobiopterin biosynthetic process"/>
    <property type="evidence" value="ECO:0007669"/>
    <property type="project" value="InterPro"/>
</dbReference>
<dbReference type="CDD" id="cd00913">
    <property type="entry name" value="PCD_DCoH_subfamily_a"/>
    <property type="match status" value="1"/>
</dbReference>
<dbReference type="Gene3D" id="3.30.1360.20">
    <property type="entry name" value="Transcriptional coactivator/pterin dehydratase"/>
    <property type="match status" value="1"/>
</dbReference>
<dbReference type="HAMAP" id="MF_00434">
    <property type="entry name" value="Pterin_4_alpha"/>
    <property type="match status" value="1"/>
</dbReference>
<dbReference type="InterPro" id="IPR036428">
    <property type="entry name" value="PCD_sf"/>
</dbReference>
<dbReference type="InterPro" id="IPR050376">
    <property type="entry name" value="Pterin-4-alpha-carb_dehyd"/>
</dbReference>
<dbReference type="InterPro" id="IPR001533">
    <property type="entry name" value="Pterin_deHydtase"/>
</dbReference>
<dbReference type="NCBIfam" id="NF002016">
    <property type="entry name" value="PRK00823.1-1"/>
    <property type="match status" value="1"/>
</dbReference>
<dbReference type="PANTHER" id="PTHR42805">
    <property type="entry name" value="PTERIN-4-ALPHA-CARBINOLAMINE DEHYDRATASE-RELATED"/>
    <property type="match status" value="1"/>
</dbReference>
<dbReference type="PANTHER" id="PTHR42805:SF1">
    <property type="entry name" value="PTERIN-4-ALPHA-CARBINOLAMINE DEHYDRATASE-RELATED"/>
    <property type="match status" value="1"/>
</dbReference>
<dbReference type="Pfam" id="PF01329">
    <property type="entry name" value="Pterin_4a"/>
    <property type="match status" value="1"/>
</dbReference>
<dbReference type="SUPFAM" id="SSF55248">
    <property type="entry name" value="PCD-like"/>
    <property type="match status" value="1"/>
</dbReference>
<sequence>MTALNQAHCEACRADAPQVSDEELPVLIKQIPDWNIEVRDGVMQLEKVFLFKNFKFALAFTNAMGEISEAEGHHPGLLTEWGKVTVTWWSHSIKGLHRNDFIMAARTDEVAKTAEGRK</sequence>
<keyword id="KW-0456">Lyase</keyword>
<feature type="chain" id="PRO_0000231464" description="Putative pterin-4-alpha-carbinolamine dehydratase">
    <location>
        <begin position="1"/>
        <end position="118"/>
    </location>
</feature>
<evidence type="ECO:0000255" key="1">
    <source>
        <dbReference type="HAMAP-Rule" id="MF_00434"/>
    </source>
</evidence>
<protein>
    <recommendedName>
        <fullName evidence="1">Putative pterin-4-alpha-carbinolamine dehydratase</fullName>
        <shortName evidence="1">PHS</shortName>
        <ecNumber evidence="1">4.2.1.96</ecNumber>
    </recommendedName>
    <alternativeName>
        <fullName evidence="1">4-alpha-hydroxy-tetrahydropterin dehydratase</fullName>
    </alternativeName>
    <alternativeName>
        <fullName evidence="1">Pterin carbinolamine dehydratase</fullName>
        <shortName evidence="1">PCD</shortName>
    </alternativeName>
</protein>
<organism>
    <name type="scientific">Pseudomonas fluorescens (strain ATCC BAA-477 / NRRL B-23932 / Pf-5)</name>
    <dbReference type="NCBI Taxonomy" id="220664"/>
    <lineage>
        <taxon>Bacteria</taxon>
        <taxon>Pseudomonadati</taxon>
        <taxon>Pseudomonadota</taxon>
        <taxon>Gammaproteobacteria</taxon>
        <taxon>Pseudomonadales</taxon>
        <taxon>Pseudomonadaceae</taxon>
        <taxon>Pseudomonas</taxon>
    </lineage>
</organism>
<reference key="1">
    <citation type="journal article" date="2005" name="Nat. Biotechnol.">
        <title>Complete genome sequence of the plant commensal Pseudomonas fluorescens Pf-5.</title>
        <authorList>
            <person name="Paulsen I.T."/>
            <person name="Press C.M."/>
            <person name="Ravel J."/>
            <person name="Kobayashi D.Y."/>
            <person name="Myers G.S.A."/>
            <person name="Mavrodi D.V."/>
            <person name="DeBoy R.T."/>
            <person name="Seshadri R."/>
            <person name="Ren Q."/>
            <person name="Madupu R."/>
            <person name="Dodson R.J."/>
            <person name="Durkin A.S."/>
            <person name="Brinkac L.M."/>
            <person name="Daugherty S.C."/>
            <person name="Sullivan S.A."/>
            <person name="Rosovitz M.J."/>
            <person name="Gwinn M.L."/>
            <person name="Zhou L."/>
            <person name="Schneider D.J."/>
            <person name="Cartinhour S.W."/>
            <person name="Nelson W.C."/>
            <person name="Weidman J."/>
            <person name="Watkins K."/>
            <person name="Tran K."/>
            <person name="Khouri H."/>
            <person name="Pierson E.A."/>
            <person name="Pierson L.S. III"/>
            <person name="Thomashow L.S."/>
            <person name="Loper J.E."/>
        </authorList>
    </citation>
    <scope>NUCLEOTIDE SEQUENCE [LARGE SCALE GENOMIC DNA]</scope>
    <source>
        <strain>ATCC BAA-477 / NRRL B-23932 / Pf-5</strain>
    </source>
</reference>
<name>PHS_PSEF5</name>
<proteinExistence type="inferred from homology"/>
<accession>Q4KG97</accession>
<comment type="catalytic activity">
    <reaction evidence="1">
        <text>(4aS,6R)-4a-hydroxy-L-erythro-5,6,7,8-tetrahydrobiopterin = (6R)-L-erythro-6,7-dihydrobiopterin + H2O</text>
        <dbReference type="Rhea" id="RHEA:11920"/>
        <dbReference type="ChEBI" id="CHEBI:15377"/>
        <dbReference type="ChEBI" id="CHEBI:15642"/>
        <dbReference type="ChEBI" id="CHEBI:43120"/>
        <dbReference type="EC" id="4.2.1.96"/>
    </reaction>
</comment>
<comment type="similarity">
    <text evidence="1">Belongs to the pterin-4-alpha-carbinolamine dehydratase family.</text>
</comment>